<evidence type="ECO:0000255" key="1">
    <source>
        <dbReference type="HAMAP-Rule" id="MF_00259"/>
    </source>
</evidence>
<comment type="function">
    <text evidence="1">The glycine cleavage system catalyzes the degradation of glycine.</text>
</comment>
<comment type="catalytic activity">
    <reaction evidence="1">
        <text>N(6)-[(R)-S(8)-aminomethyldihydrolipoyl]-L-lysyl-[protein] + (6S)-5,6,7,8-tetrahydrofolate = N(6)-[(R)-dihydrolipoyl]-L-lysyl-[protein] + (6R)-5,10-methylene-5,6,7,8-tetrahydrofolate + NH4(+)</text>
        <dbReference type="Rhea" id="RHEA:16945"/>
        <dbReference type="Rhea" id="RHEA-COMP:10475"/>
        <dbReference type="Rhea" id="RHEA-COMP:10492"/>
        <dbReference type="ChEBI" id="CHEBI:15636"/>
        <dbReference type="ChEBI" id="CHEBI:28938"/>
        <dbReference type="ChEBI" id="CHEBI:57453"/>
        <dbReference type="ChEBI" id="CHEBI:83100"/>
        <dbReference type="ChEBI" id="CHEBI:83143"/>
        <dbReference type="EC" id="2.1.2.10"/>
    </reaction>
</comment>
<comment type="subunit">
    <text evidence="1">The glycine cleavage system is composed of four proteins: P, T, L and H.</text>
</comment>
<comment type="similarity">
    <text evidence="1">Belongs to the GcvT family.</text>
</comment>
<protein>
    <recommendedName>
        <fullName evidence="1">Aminomethyltransferase</fullName>
        <ecNumber evidence="1">2.1.2.10</ecNumber>
    </recommendedName>
    <alternativeName>
        <fullName evidence="1">Glycine cleavage system T protein</fullName>
    </alternativeName>
</protein>
<sequence length="363" mass="40462">MKRTPLYERHVALGAKMVDFAGWIMPLYYSSIFEEVMAVRKSVGVFDVSHMGEIVVEGQETVDFVNFLVTNDFSAIPEGKAMYTVMCNETGGIVDDLVVYRISHEKAIMVVNAANIEKDYEWIKVHAKNFNVEVRNVSDETALVAFQGPKSQETLQRVVDIDLEGIGYYSFQWGRLDGERVLVSRTGYTGEDGFELMMNAESAAKIWDTLVEIAGNVDGKPAGLGARDVCRLEASYLLYGQDMDESTNPFEVGLSWVVKMNKDFVGKEALLKLKEKVERKLVALELSGRRIARKGYTVLKEGKEVGKITSGNFSPTLGKSIALALVSRCVKTGDRLEVVFPGKNVEAHVVKKPFYRGSVRREA</sequence>
<dbReference type="EC" id="2.1.2.10" evidence="1"/>
<dbReference type="EMBL" id="CP000916">
    <property type="protein sequence ID" value="ACM22650.1"/>
    <property type="molecule type" value="Genomic_DNA"/>
</dbReference>
<dbReference type="RefSeq" id="WP_015918969.1">
    <property type="nucleotide sequence ID" value="NC_011978.1"/>
</dbReference>
<dbReference type="SMR" id="B9K6R7"/>
<dbReference type="STRING" id="309803.CTN_0474"/>
<dbReference type="KEGG" id="tna:CTN_0474"/>
<dbReference type="eggNOG" id="COG0404">
    <property type="taxonomic scope" value="Bacteria"/>
</dbReference>
<dbReference type="HOGENOM" id="CLU_007884_10_2_0"/>
<dbReference type="Proteomes" id="UP000000445">
    <property type="component" value="Chromosome"/>
</dbReference>
<dbReference type="GO" id="GO:0005829">
    <property type="term" value="C:cytosol"/>
    <property type="evidence" value="ECO:0007669"/>
    <property type="project" value="TreeGrafter"/>
</dbReference>
<dbReference type="GO" id="GO:0005960">
    <property type="term" value="C:glycine cleavage complex"/>
    <property type="evidence" value="ECO:0007669"/>
    <property type="project" value="InterPro"/>
</dbReference>
<dbReference type="GO" id="GO:0004047">
    <property type="term" value="F:aminomethyltransferase activity"/>
    <property type="evidence" value="ECO:0007669"/>
    <property type="project" value="UniProtKB-UniRule"/>
</dbReference>
<dbReference type="GO" id="GO:0008483">
    <property type="term" value="F:transaminase activity"/>
    <property type="evidence" value="ECO:0007669"/>
    <property type="project" value="UniProtKB-KW"/>
</dbReference>
<dbReference type="GO" id="GO:0019464">
    <property type="term" value="P:glycine decarboxylation via glycine cleavage system"/>
    <property type="evidence" value="ECO:0007669"/>
    <property type="project" value="UniProtKB-UniRule"/>
</dbReference>
<dbReference type="FunFam" id="2.40.30.110:FF:000003">
    <property type="entry name" value="Aminomethyltransferase"/>
    <property type="match status" value="1"/>
</dbReference>
<dbReference type="FunFam" id="3.30.70.1400:FF:000001">
    <property type="entry name" value="Aminomethyltransferase"/>
    <property type="match status" value="1"/>
</dbReference>
<dbReference type="FunFam" id="4.10.1250.10:FF:000001">
    <property type="entry name" value="Aminomethyltransferase"/>
    <property type="match status" value="1"/>
</dbReference>
<dbReference type="Gene3D" id="2.40.30.110">
    <property type="entry name" value="Aminomethyltransferase beta-barrel domains"/>
    <property type="match status" value="1"/>
</dbReference>
<dbReference type="Gene3D" id="3.30.70.1400">
    <property type="entry name" value="Aminomethyltransferase beta-barrel domains"/>
    <property type="match status" value="1"/>
</dbReference>
<dbReference type="Gene3D" id="4.10.1250.10">
    <property type="entry name" value="Aminomethyltransferase fragment"/>
    <property type="match status" value="1"/>
</dbReference>
<dbReference type="Gene3D" id="3.30.1360.120">
    <property type="entry name" value="Probable tRNA modification gtpase trme, domain 1"/>
    <property type="match status" value="1"/>
</dbReference>
<dbReference type="HAMAP" id="MF_00259">
    <property type="entry name" value="GcvT"/>
    <property type="match status" value="1"/>
</dbReference>
<dbReference type="InterPro" id="IPR006223">
    <property type="entry name" value="GCS_T"/>
</dbReference>
<dbReference type="InterPro" id="IPR022903">
    <property type="entry name" value="GCS_T_bac"/>
</dbReference>
<dbReference type="InterPro" id="IPR013977">
    <property type="entry name" value="GCST_C"/>
</dbReference>
<dbReference type="InterPro" id="IPR006222">
    <property type="entry name" value="GCV_T_N"/>
</dbReference>
<dbReference type="InterPro" id="IPR028896">
    <property type="entry name" value="GcvT/YgfZ/DmdA"/>
</dbReference>
<dbReference type="InterPro" id="IPR029043">
    <property type="entry name" value="GcvT/YgfZ_C"/>
</dbReference>
<dbReference type="InterPro" id="IPR027266">
    <property type="entry name" value="TrmE/GcvT_dom1"/>
</dbReference>
<dbReference type="NCBIfam" id="TIGR00528">
    <property type="entry name" value="gcvT"/>
    <property type="match status" value="1"/>
</dbReference>
<dbReference type="NCBIfam" id="NF001567">
    <property type="entry name" value="PRK00389.1"/>
    <property type="match status" value="1"/>
</dbReference>
<dbReference type="PANTHER" id="PTHR43757">
    <property type="entry name" value="AMINOMETHYLTRANSFERASE"/>
    <property type="match status" value="1"/>
</dbReference>
<dbReference type="PANTHER" id="PTHR43757:SF2">
    <property type="entry name" value="AMINOMETHYLTRANSFERASE, MITOCHONDRIAL"/>
    <property type="match status" value="1"/>
</dbReference>
<dbReference type="Pfam" id="PF01571">
    <property type="entry name" value="GCV_T"/>
    <property type="match status" value="1"/>
</dbReference>
<dbReference type="Pfam" id="PF08669">
    <property type="entry name" value="GCV_T_C"/>
    <property type="match status" value="1"/>
</dbReference>
<dbReference type="PIRSF" id="PIRSF006487">
    <property type="entry name" value="GcvT"/>
    <property type="match status" value="1"/>
</dbReference>
<dbReference type="SUPFAM" id="SSF101790">
    <property type="entry name" value="Aminomethyltransferase beta-barrel domain"/>
    <property type="match status" value="1"/>
</dbReference>
<dbReference type="SUPFAM" id="SSF103025">
    <property type="entry name" value="Folate-binding domain"/>
    <property type="match status" value="1"/>
</dbReference>
<reference key="1">
    <citation type="submission" date="2007-11" db="EMBL/GenBank/DDBJ databases">
        <title>The genome sequence of the hyperthermophilic bacterium Thermotoga neapolitana.</title>
        <authorList>
            <person name="Lim S.K."/>
            <person name="Kim J.S."/>
            <person name="Cha S.H."/>
            <person name="Park B.C."/>
            <person name="Lee D.S."/>
            <person name="Tae H.S."/>
            <person name="Kim S.-J."/>
            <person name="Kim J.J."/>
            <person name="Park K.J."/>
            <person name="Lee S.Y."/>
        </authorList>
    </citation>
    <scope>NUCLEOTIDE SEQUENCE [LARGE SCALE GENOMIC DNA]</scope>
    <source>
        <strain>ATCC 49049 / DSM 4359 / NBRC 107923 / NS-E</strain>
    </source>
</reference>
<feature type="chain" id="PRO_1000125648" description="Aminomethyltransferase">
    <location>
        <begin position="1"/>
        <end position="363"/>
    </location>
</feature>
<accession>B9K6R7</accession>
<keyword id="KW-0032">Aminotransferase</keyword>
<keyword id="KW-0808">Transferase</keyword>
<gene>
    <name evidence="1" type="primary">gcvT</name>
    <name type="ordered locus">CTN_0474</name>
</gene>
<organism>
    <name type="scientific">Thermotoga neapolitana (strain ATCC 49049 / DSM 4359 / NBRC 107923 / NS-E)</name>
    <dbReference type="NCBI Taxonomy" id="309803"/>
    <lineage>
        <taxon>Bacteria</taxon>
        <taxon>Thermotogati</taxon>
        <taxon>Thermotogota</taxon>
        <taxon>Thermotogae</taxon>
        <taxon>Thermotogales</taxon>
        <taxon>Thermotogaceae</taxon>
        <taxon>Thermotoga</taxon>
    </lineage>
</organism>
<proteinExistence type="inferred from homology"/>
<name>GCST_THENN</name>